<gene>
    <name evidence="1" type="primary">groEL</name>
    <name evidence="1" type="synonym">groL</name>
    <name type="ordered locus">CLK_2714</name>
</gene>
<organism>
    <name type="scientific">Clostridium botulinum (strain Loch Maree / Type A3)</name>
    <dbReference type="NCBI Taxonomy" id="498214"/>
    <lineage>
        <taxon>Bacteria</taxon>
        <taxon>Bacillati</taxon>
        <taxon>Bacillota</taxon>
        <taxon>Clostridia</taxon>
        <taxon>Eubacteriales</taxon>
        <taxon>Clostridiaceae</taxon>
        <taxon>Clostridium</taxon>
    </lineage>
</organism>
<reference key="1">
    <citation type="journal article" date="2007" name="PLoS ONE">
        <title>Analysis of the neurotoxin complex genes in Clostridium botulinum A1-A4 and B1 strains: BoNT/A3, /Ba4 and /B1 clusters are located within plasmids.</title>
        <authorList>
            <person name="Smith T.J."/>
            <person name="Hill K.K."/>
            <person name="Foley B.T."/>
            <person name="Detter J.C."/>
            <person name="Munk A.C."/>
            <person name="Bruce D.C."/>
            <person name="Doggett N.A."/>
            <person name="Smith L.A."/>
            <person name="Marks J.D."/>
            <person name="Xie G."/>
            <person name="Brettin T.S."/>
        </authorList>
    </citation>
    <scope>NUCLEOTIDE SEQUENCE [LARGE SCALE GENOMIC DNA]</scope>
    <source>
        <strain>Loch Maree / Type A3</strain>
    </source>
</reference>
<proteinExistence type="inferred from homology"/>
<sequence length="541" mass="57908">MAKSLLFGEQARRSMEAGVDKLADTVRVTLGPKGRNVVLDKKFGSPLITNDGVTIAREIELEDPYENMGAQLVKEVATKTNDVAGDGTTTATLLAQAIIREGLKNVTAGANPIQIRTGIRKAVEKAVEEIKVISKPVNGKEDIARVAAISAASEEVGKLIADAMERVGNDGVITVEESKSMGTDLEVVEGMQFDRGYVSAYMVTDTEKMEAVLDDVYILITDKKISNIQEILPILEQIVQQGKKLLIISEDIEGEALSTLVLNKLRGTFTCVGVKAPGFGDRRKEMLQDIAILTGGEVISEELGRDLKDVTIDMLGTADSVKVTKENTTIVNGKGDKVAIKERVSQIRVQIEDTTSEFDKEKLQERLAKLAGGVAVIRVGAATETELKEEKLRIEDALAATKAAVEEGIVPGGGTAYIDIIPKIADLTSDIIDVKLGIDIIRKALEEPVRQIANNAGAEGSVIIEKVKASEAGVGYDALNDKYVDMLKTGIVDPTKVTRSALQNAASIASTFLTTEAAVADIPEKENTPPMAPGMGMDGMY</sequence>
<feature type="chain" id="PRO_1000129995" description="Chaperonin GroEL">
    <location>
        <begin position="1"/>
        <end position="541"/>
    </location>
</feature>
<feature type="binding site" evidence="1">
    <location>
        <begin position="29"/>
        <end position="32"/>
    </location>
    <ligand>
        <name>ATP</name>
        <dbReference type="ChEBI" id="CHEBI:30616"/>
    </ligand>
</feature>
<feature type="binding site" evidence="1">
    <location>
        <begin position="86"/>
        <end position="90"/>
    </location>
    <ligand>
        <name>ATP</name>
        <dbReference type="ChEBI" id="CHEBI:30616"/>
    </ligand>
</feature>
<feature type="binding site" evidence="1">
    <location>
        <position position="413"/>
    </location>
    <ligand>
        <name>ATP</name>
        <dbReference type="ChEBI" id="CHEBI:30616"/>
    </ligand>
</feature>
<feature type="binding site" evidence="1">
    <location>
        <begin position="477"/>
        <end position="479"/>
    </location>
    <ligand>
        <name>ATP</name>
        <dbReference type="ChEBI" id="CHEBI:30616"/>
    </ligand>
</feature>
<feature type="binding site" evidence="1">
    <location>
        <position position="493"/>
    </location>
    <ligand>
        <name>ATP</name>
        <dbReference type="ChEBI" id="CHEBI:30616"/>
    </ligand>
</feature>
<name>CH60_CLOBM</name>
<comment type="function">
    <text evidence="1">Together with its co-chaperonin GroES, plays an essential role in assisting protein folding. The GroEL-GroES system forms a nano-cage that allows encapsulation of the non-native substrate proteins and provides a physical environment optimized to promote and accelerate protein folding.</text>
</comment>
<comment type="catalytic activity">
    <reaction evidence="1">
        <text>ATP + H2O + a folded polypeptide = ADP + phosphate + an unfolded polypeptide.</text>
        <dbReference type="EC" id="5.6.1.7"/>
    </reaction>
</comment>
<comment type="subunit">
    <text evidence="1">Forms a cylinder of 14 subunits composed of two heptameric rings stacked back-to-back. Interacts with the co-chaperonin GroES.</text>
</comment>
<comment type="subcellular location">
    <subcellularLocation>
        <location evidence="1">Cytoplasm</location>
    </subcellularLocation>
</comment>
<comment type="similarity">
    <text evidence="1">Belongs to the chaperonin (HSP60) family.</text>
</comment>
<dbReference type="EC" id="5.6.1.7" evidence="1"/>
<dbReference type="EMBL" id="CP000962">
    <property type="protein sequence ID" value="ACA55584.1"/>
    <property type="molecule type" value="Genomic_DNA"/>
</dbReference>
<dbReference type="RefSeq" id="WP_012343546.1">
    <property type="nucleotide sequence ID" value="NC_010520.1"/>
</dbReference>
<dbReference type="SMR" id="B1L1K0"/>
<dbReference type="KEGG" id="cbl:CLK_2714"/>
<dbReference type="HOGENOM" id="CLU_016503_3_0_9"/>
<dbReference type="GO" id="GO:0005737">
    <property type="term" value="C:cytoplasm"/>
    <property type="evidence" value="ECO:0007669"/>
    <property type="project" value="UniProtKB-SubCell"/>
</dbReference>
<dbReference type="GO" id="GO:0005524">
    <property type="term" value="F:ATP binding"/>
    <property type="evidence" value="ECO:0007669"/>
    <property type="project" value="UniProtKB-UniRule"/>
</dbReference>
<dbReference type="GO" id="GO:0140662">
    <property type="term" value="F:ATP-dependent protein folding chaperone"/>
    <property type="evidence" value="ECO:0007669"/>
    <property type="project" value="InterPro"/>
</dbReference>
<dbReference type="GO" id="GO:0016853">
    <property type="term" value="F:isomerase activity"/>
    <property type="evidence" value="ECO:0007669"/>
    <property type="project" value="UniProtKB-KW"/>
</dbReference>
<dbReference type="GO" id="GO:0051082">
    <property type="term" value="F:unfolded protein binding"/>
    <property type="evidence" value="ECO:0007669"/>
    <property type="project" value="UniProtKB-UniRule"/>
</dbReference>
<dbReference type="GO" id="GO:0042026">
    <property type="term" value="P:protein refolding"/>
    <property type="evidence" value="ECO:0007669"/>
    <property type="project" value="UniProtKB-UniRule"/>
</dbReference>
<dbReference type="CDD" id="cd03344">
    <property type="entry name" value="GroEL"/>
    <property type="match status" value="1"/>
</dbReference>
<dbReference type="FunFam" id="3.50.7.10:FF:000001">
    <property type="entry name" value="60 kDa chaperonin"/>
    <property type="match status" value="1"/>
</dbReference>
<dbReference type="Gene3D" id="3.50.7.10">
    <property type="entry name" value="GroEL"/>
    <property type="match status" value="1"/>
</dbReference>
<dbReference type="Gene3D" id="1.10.560.10">
    <property type="entry name" value="GroEL-like equatorial domain"/>
    <property type="match status" value="1"/>
</dbReference>
<dbReference type="Gene3D" id="3.30.260.10">
    <property type="entry name" value="TCP-1-like chaperonin intermediate domain"/>
    <property type="match status" value="1"/>
</dbReference>
<dbReference type="HAMAP" id="MF_00600">
    <property type="entry name" value="CH60"/>
    <property type="match status" value="1"/>
</dbReference>
<dbReference type="InterPro" id="IPR018370">
    <property type="entry name" value="Chaperonin_Cpn60_CS"/>
</dbReference>
<dbReference type="InterPro" id="IPR001844">
    <property type="entry name" value="Cpn60/GroEL"/>
</dbReference>
<dbReference type="InterPro" id="IPR002423">
    <property type="entry name" value="Cpn60/GroEL/TCP-1"/>
</dbReference>
<dbReference type="InterPro" id="IPR027409">
    <property type="entry name" value="GroEL-like_apical_dom_sf"/>
</dbReference>
<dbReference type="InterPro" id="IPR027413">
    <property type="entry name" value="GROEL-like_equatorial_sf"/>
</dbReference>
<dbReference type="InterPro" id="IPR027410">
    <property type="entry name" value="TCP-1-like_intermed_sf"/>
</dbReference>
<dbReference type="NCBIfam" id="TIGR02348">
    <property type="entry name" value="GroEL"/>
    <property type="match status" value="1"/>
</dbReference>
<dbReference type="NCBIfam" id="NF000592">
    <property type="entry name" value="PRK00013.1"/>
    <property type="match status" value="1"/>
</dbReference>
<dbReference type="NCBIfam" id="NF009487">
    <property type="entry name" value="PRK12849.1"/>
    <property type="match status" value="1"/>
</dbReference>
<dbReference type="NCBIfam" id="NF009488">
    <property type="entry name" value="PRK12850.1"/>
    <property type="match status" value="1"/>
</dbReference>
<dbReference type="NCBIfam" id="NF009489">
    <property type="entry name" value="PRK12851.1"/>
    <property type="match status" value="1"/>
</dbReference>
<dbReference type="PANTHER" id="PTHR45633">
    <property type="entry name" value="60 KDA HEAT SHOCK PROTEIN, MITOCHONDRIAL"/>
    <property type="match status" value="1"/>
</dbReference>
<dbReference type="Pfam" id="PF00118">
    <property type="entry name" value="Cpn60_TCP1"/>
    <property type="match status" value="1"/>
</dbReference>
<dbReference type="PRINTS" id="PR00298">
    <property type="entry name" value="CHAPERONIN60"/>
</dbReference>
<dbReference type="SUPFAM" id="SSF52029">
    <property type="entry name" value="GroEL apical domain-like"/>
    <property type="match status" value="1"/>
</dbReference>
<dbReference type="SUPFAM" id="SSF48592">
    <property type="entry name" value="GroEL equatorial domain-like"/>
    <property type="match status" value="1"/>
</dbReference>
<dbReference type="SUPFAM" id="SSF54849">
    <property type="entry name" value="GroEL-intermediate domain like"/>
    <property type="match status" value="1"/>
</dbReference>
<dbReference type="PROSITE" id="PS00296">
    <property type="entry name" value="CHAPERONINS_CPN60"/>
    <property type="match status" value="1"/>
</dbReference>
<keyword id="KW-0067">ATP-binding</keyword>
<keyword id="KW-0143">Chaperone</keyword>
<keyword id="KW-0963">Cytoplasm</keyword>
<keyword id="KW-0413">Isomerase</keyword>
<keyword id="KW-0547">Nucleotide-binding</keyword>
<evidence type="ECO:0000255" key="1">
    <source>
        <dbReference type="HAMAP-Rule" id="MF_00600"/>
    </source>
</evidence>
<accession>B1L1K0</accession>
<protein>
    <recommendedName>
        <fullName evidence="1">Chaperonin GroEL</fullName>
        <ecNumber evidence="1">5.6.1.7</ecNumber>
    </recommendedName>
    <alternativeName>
        <fullName evidence="1">60 kDa chaperonin</fullName>
    </alternativeName>
    <alternativeName>
        <fullName evidence="1">Chaperonin-60</fullName>
        <shortName evidence="1">Cpn60</shortName>
    </alternativeName>
</protein>